<protein>
    <recommendedName>
        <fullName evidence="1">Orotate phosphoribosyltransferase</fullName>
        <shortName evidence="1">OPRT</shortName>
        <shortName evidence="1">OPRTase</shortName>
        <ecNumber evidence="1">2.4.2.10</ecNumber>
    </recommendedName>
</protein>
<reference key="1">
    <citation type="journal article" date="2005" name="Genome Res.">
        <title>Coping with cold: the genome of the versatile marine Antarctica bacterium Pseudoalteromonas haloplanktis TAC125.</title>
        <authorList>
            <person name="Medigue C."/>
            <person name="Krin E."/>
            <person name="Pascal G."/>
            <person name="Barbe V."/>
            <person name="Bernsel A."/>
            <person name="Bertin P.N."/>
            <person name="Cheung F."/>
            <person name="Cruveiller S."/>
            <person name="D'Amico S."/>
            <person name="Duilio A."/>
            <person name="Fang G."/>
            <person name="Feller G."/>
            <person name="Ho C."/>
            <person name="Mangenot S."/>
            <person name="Marino G."/>
            <person name="Nilsson J."/>
            <person name="Parrilli E."/>
            <person name="Rocha E.P.C."/>
            <person name="Rouy Z."/>
            <person name="Sekowska A."/>
            <person name="Tutino M.L."/>
            <person name="Vallenet D."/>
            <person name="von Heijne G."/>
            <person name="Danchin A."/>
        </authorList>
    </citation>
    <scope>NUCLEOTIDE SEQUENCE [LARGE SCALE GENOMIC DNA]</scope>
    <source>
        <strain>TAC 125</strain>
    </source>
</reference>
<sequence>MKDYQIEFIEFALEKQVLKFGEFTLKSGRTSPYFFNAGLFNTGRDLARLGRFYAAALEDAAIEYDVLFGPAYKGIPIATTTAVALADHYNKDVPYCFNRKEKKAHGEGGTLVGSELKGKIMLVDDVITAGTAIRESMEIIAENGADLSGVLIALDRQEKGKAELSAIQEVERDFNTKVISIVKLADLISYLESQGTMDQHLASVKAYRDQYGVA</sequence>
<proteinExistence type="inferred from homology"/>
<organism>
    <name type="scientific">Pseudoalteromonas translucida (strain TAC 125)</name>
    <dbReference type="NCBI Taxonomy" id="326442"/>
    <lineage>
        <taxon>Bacteria</taxon>
        <taxon>Pseudomonadati</taxon>
        <taxon>Pseudomonadota</taxon>
        <taxon>Gammaproteobacteria</taxon>
        <taxon>Alteromonadales</taxon>
        <taxon>Pseudoalteromonadaceae</taxon>
        <taxon>Pseudoalteromonas</taxon>
    </lineage>
</organism>
<feature type="chain" id="PRO_1000066275" description="Orotate phosphoribosyltransferase">
    <location>
        <begin position="1"/>
        <end position="214"/>
    </location>
</feature>
<feature type="binding site" description="in other chain" evidence="1">
    <location>
        <position position="26"/>
    </location>
    <ligand>
        <name>5-phospho-alpha-D-ribose 1-diphosphate</name>
        <dbReference type="ChEBI" id="CHEBI:58017"/>
        <note>ligand shared between dimeric partners</note>
    </ligand>
</feature>
<feature type="binding site" evidence="1">
    <location>
        <begin position="34"/>
        <end position="35"/>
    </location>
    <ligand>
        <name>orotate</name>
        <dbReference type="ChEBI" id="CHEBI:30839"/>
    </ligand>
</feature>
<feature type="binding site" description="in other chain" evidence="1">
    <location>
        <begin position="72"/>
        <end position="73"/>
    </location>
    <ligand>
        <name>5-phospho-alpha-D-ribose 1-diphosphate</name>
        <dbReference type="ChEBI" id="CHEBI:58017"/>
        <note>ligand shared between dimeric partners</note>
    </ligand>
</feature>
<feature type="binding site" evidence="1">
    <location>
        <position position="99"/>
    </location>
    <ligand>
        <name>5-phospho-alpha-D-ribose 1-diphosphate</name>
        <dbReference type="ChEBI" id="CHEBI:58017"/>
        <note>ligand shared between dimeric partners</note>
    </ligand>
</feature>
<feature type="binding site" description="in other chain" evidence="1">
    <location>
        <position position="100"/>
    </location>
    <ligand>
        <name>5-phospho-alpha-D-ribose 1-diphosphate</name>
        <dbReference type="ChEBI" id="CHEBI:58017"/>
        <note>ligand shared between dimeric partners</note>
    </ligand>
</feature>
<feature type="binding site" evidence="1">
    <location>
        <position position="103"/>
    </location>
    <ligand>
        <name>5-phospho-alpha-D-ribose 1-diphosphate</name>
        <dbReference type="ChEBI" id="CHEBI:58017"/>
        <note>ligand shared between dimeric partners</note>
    </ligand>
</feature>
<feature type="binding site" evidence="1">
    <location>
        <position position="105"/>
    </location>
    <ligand>
        <name>5-phospho-alpha-D-ribose 1-diphosphate</name>
        <dbReference type="ChEBI" id="CHEBI:58017"/>
        <note>ligand shared between dimeric partners</note>
    </ligand>
</feature>
<feature type="binding site" description="in other chain" evidence="1">
    <location>
        <begin position="124"/>
        <end position="132"/>
    </location>
    <ligand>
        <name>5-phospho-alpha-D-ribose 1-diphosphate</name>
        <dbReference type="ChEBI" id="CHEBI:58017"/>
        <note>ligand shared between dimeric partners</note>
    </ligand>
</feature>
<feature type="binding site" evidence="1">
    <location>
        <position position="128"/>
    </location>
    <ligand>
        <name>orotate</name>
        <dbReference type="ChEBI" id="CHEBI:30839"/>
    </ligand>
</feature>
<feature type="binding site" evidence="1">
    <location>
        <position position="156"/>
    </location>
    <ligand>
        <name>orotate</name>
        <dbReference type="ChEBI" id="CHEBI:30839"/>
    </ligand>
</feature>
<accession>Q3IJI1</accession>
<name>PYRE_PSET1</name>
<keyword id="KW-0328">Glycosyltransferase</keyword>
<keyword id="KW-0460">Magnesium</keyword>
<keyword id="KW-0665">Pyrimidine biosynthesis</keyword>
<keyword id="KW-1185">Reference proteome</keyword>
<keyword id="KW-0808">Transferase</keyword>
<dbReference type="EC" id="2.4.2.10" evidence="1"/>
<dbReference type="EMBL" id="CR954246">
    <property type="protein sequence ID" value="CAI87830.1"/>
    <property type="molecule type" value="Genomic_DNA"/>
</dbReference>
<dbReference type="SMR" id="Q3IJI1"/>
<dbReference type="STRING" id="326442.PSHAa2787"/>
<dbReference type="KEGG" id="pha:PSHAa2787"/>
<dbReference type="PATRIC" id="fig|326442.8.peg.2691"/>
<dbReference type="eggNOG" id="COG0461">
    <property type="taxonomic scope" value="Bacteria"/>
</dbReference>
<dbReference type="HOGENOM" id="CLU_074878_0_1_6"/>
<dbReference type="BioCyc" id="PHAL326442:PSHA_RS13690-MONOMER"/>
<dbReference type="UniPathway" id="UPA00070">
    <property type="reaction ID" value="UER00119"/>
</dbReference>
<dbReference type="Proteomes" id="UP000006843">
    <property type="component" value="Chromosome I"/>
</dbReference>
<dbReference type="GO" id="GO:0005737">
    <property type="term" value="C:cytoplasm"/>
    <property type="evidence" value="ECO:0007669"/>
    <property type="project" value="TreeGrafter"/>
</dbReference>
<dbReference type="GO" id="GO:0000287">
    <property type="term" value="F:magnesium ion binding"/>
    <property type="evidence" value="ECO:0007669"/>
    <property type="project" value="UniProtKB-UniRule"/>
</dbReference>
<dbReference type="GO" id="GO:0004588">
    <property type="term" value="F:orotate phosphoribosyltransferase activity"/>
    <property type="evidence" value="ECO:0007669"/>
    <property type="project" value="UniProtKB-UniRule"/>
</dbReference>
<dbReference type="GO" id="GO:0006207">
    <property type="term" value="P:'de novo' pyrimidine nucleobase biosynthetic process"/>
    <property type="evidence" value="ECO:0007669"/>
    <property type="project" value="TreeGrafter"/>
</dbReference>
<dbReference type="GO" id="GO:0044205">
    <property type="term" value="P:'de novo' UMP biosynthetic process"/>
    <property type="evidence" value="ECO:0007669"/>
    <property type="project" value="UniProtKB-UniRule"/>
</dbReference>
<dbReference type="GO" id="GO:0046132">
    <property type="term" value="P:pyrimidine ribonucleoside biosynthetic process"/>
    <property type="evidence" value="ECO:0007669"/>
    <property type="project" value="TreeGrafter"/>
</dbReference>
<dbReference type="CDD" id="cd06223">
    <property type="entry name" value="PRTases_typeI"/>
    <property type="match status" value="1"/>
</dbReference>
<dbReference type="FunFam" id="3.40.50.2020:FF:000008">
    <property type="entry name" value="Orotate phosphoribosyltransferase"/>
    <property type="match status" value="1"/>
</dbReference>
<dbReference type="Gene3D" id="3.40.50.2020">
    <property type="match status" value="1"/>
</dbReference>
<dbReference type="HAMAP" id="MF_01208">
    <property type="entry name" value="PyrE"/>
    <property type="match status" value="1"/>
</dbReference>
<dbReference type="InterPro" id="IPR023031">
    <property type="entry name" value="OPRT"/>
</dbReference>
<dbReference type="InterPro" id="IPR004467">
    <property type="entry name" value="Or_phspho_trans_dom"/>
</dbReference>
<dbReference type="InterPro" id="IPR000836">
    <property type="entry name" value="PRibTrfase_dom"/>
</dbReference>
<dbReference type="InterPro" id="IPR029057">
    <property type="entry name" value="PRTase-like"/>
</dbReference>
<dbReference type="NCBIfam" id="TIGR00336">
    <property type="entry name" value="pyrE"/>
    <property type="match status" value="1"/>
</dbReference>
<dbReference type="PANTHER" id="PTHR46683">
    <property type="entry name" value="OROTATE PHOSPHORIBOSYLTRANSFERASE 1-RELATED"/>
    <property type="match status" value="1"/>
</dbReference>
<dbReference type="PANTHER" id="PTHR46683:SF1">
    <property type="entry name" value="OROTATE PHOSPHORIBOSYLTRANSFERASE 1-RELATED"/>
    <property type="match status" value="1"/>
</dbReference>
<dbReference type="Pfam" id="PF00156">
    <property type="entry name" value="Pribosyltran"/>
    <property type="match status" value="1"/>
</dbReference>
<dbReference type="SUPFAM" id="SSF53271">
    <property type="entry name" value="PRTase-like"/>
    <property type="match status" value="1"/>
</dbReference>
<dbReference type="PROSITE" id="PS00103">
    <property type="entry name" value="PUR_PYR_PR_TRANSFER"/>
    <property type="match status" value="1"/>
</dbReference>
<comment type="function">
    <text evidence="1">Catalyzes the transfer of a ribosyl phosphate group from 5-phosphoribose 1-diphosphate to orotate, leading to the formation of orotidine monophosphate (OMP).</text>
</comment>
<comment type="catalytic activity">
    <reaction evidence="1">
        <text>orotidine 5'-phosphate + diphosphate = orotate + 5-phospho-alpha-D-ribose 1-diphosphate</text>
        <dbReference type="Rhea" id="RHEA:10380"/>
        <dbReference type="ChEBI" id="CHEBI:30839"/>
        <dbReference type="ChEBI" id="CHEBI:33019"/>
        <dbReference type="ChEBI" id="CHEBI:57538"/>
        <dbReference type="ChEBI" id="CHEBI:58017"/>
        <dbReference type="EC" id="2.4.2.10"/>
    </reaction>
</comment>
<comment type="cofactor">
    <cofactor evidence="1">
        <name>Mg(2+)</name>
        <dbReference type="ChEBI" id="CHEBI:18420"/>
    </cofactor>
</comment>
<comment type="pathway">
    <text evidence="1">Pyrimidine metabolism; UMP biosynthesis via de novo pathway; UMP from orotate: step 1/2.</text>
</comment>
<comment type="subunit">
    <text evidence="1">Homodimer.</text>
</comment>
<comment type="similarity">
    <text evidence="1">Belongs to the purine/pyrimidine phosphoribosyltransferase family. PyrE subfamily.</text>
</comment>
<evidence type="ECO:0000255" key="1">
    <source>
        <dbReference type="HAMAP-Rule" id="MF_01208"/>
    </source>
</evidence>
<gene>
    <name evidence="1" type="primary">pyrE</name>
    <name type="ordered locus">PSHAa2787</name>
</gene>